<sequence length="56" mass="6392">MAVQQNKKSRSRRDMRRSHDALTTAAVSVDKASGETHLRHHVTADGYYRGRKVINK</sequence>
<evidence type="ECO:0000255" key="1">
    <source>
        <dbReference type="HAMAP-Rule" id="MF_00340"/>
    </source>
</evidence>
<evidence type="ECO:0000256" key="2">
    <source>
        <dbReference type="SAM" id="MobiDB-lite"/>
    </source>
</evidence>
<evidence type="ECO:0000305" key="3"/>
<proteinExistence type="inferred from homology"/>
<comment type="similarity">
    <text evidence="1">Belongs to the bacterial ribosomal protein bL32 family.</text>
</comment>
<gene>
    <name evidence="1" type="primary">rpmF</name>
    <name type="ordered locus">CGSHiEE_02490</name>
</gene>
<keyword id="KW-0687">Ribonucleoprotein</keyword>
<keyword id="KW-0689">Ribosomal protein</keyword>
<reference key="1">
    <citation type="journal article" date="2007" name="Genome Biol.">
        <title>Characterization and modeling of the Haemophilus influenzae core and supragenomes based on the complete genomic sequences of Rd and 12 clinical nontypeable strains.</title>
        <authorList>
            <person name="Hogg J.S."/>
            <person name="Hu F.Z."/>
            <person name="Janto B."/>
            <person name="Boissy R."/>
            <person name="Hayes J."/>
            <person name="Keefe R."/>
            <person name="Post J.C."/>
            <person name="Ehrlich G.D."/>
        </authorList>
    </citation>
    <scope>NUCLEOTIDE SEQUENCE [LARGE SCALE GENOMIC DNA]</scope>
    <source>
        <strain>PittEE</strain>
    </source>
</reference>
<protein>
    <recommendedName>
        <fullName evidence="1">Large ribosomal subunit protein bL32</fullName>
    </recommendedName>
    <alternativeName>
        <fullName evidence="3">50S ribosomal protein L32</fullName>
    </alternativeName>
</protein>
<accession>A5UAZ2</accession>
<name>RL32_HAEIE</name>
<dbReference type="EMBL" id="CP000671">
    <property type="protein sequence ID" value="ABQ97943.1"/>
    <property type="molecule type" value="Genomic_DNA"/>
</dbReference>
<dbReference type="SMR" id="A5UAZ2"/>
<dbReference type="KEGG" id="hip:CGSHiEE_02490"/>
<dbReference type="HOGENOM" id="CLU_129084_2_1_6"/>
<dbReference type="GO" id="GO:0015934">
    <property type="term" value="C:large ribosomal subunit"/>
    <property type="evidence" value="ECO:0007669"/>
    <property type="project" value="InterPro"/>
</dbReference>
<dbReference type="GO" id="GO:0003735">
    <property type="term" value="F:structural constituent of ribosome"/>
    <property type="evidence" value="ECO:0007669"/>
    <property type="project" value="InterPro"/>
</dbReference>
<dbReference type="GO" id="GO:0006412">
    <property type="term" value="P:translation"/>
    <property type="evidence" value="ECO:0007669"/>
    <property type="project" value="UniProtKB-UniRule"/>
</dbReference>
<dbReference type="Gene3D" id="1.20.5.640">
    <property type="entry name" value="Single helix bin"/>
    <property type="match status" value="1"/>
</dbReference>
<dbReference type="HAMAP" id="MF_00340">
    <property type="entry name" value="Ribosomal_bL32"/>
    <property type="match status" value="1"/>
</dbReference>
<dbReference type="InterPro" id="IPR002677">
    <property type="entry name" value="Ribosomal_bL32"/>
</dbReference>
<dbReference type="InterPro" id="IPR044957">
    <property type="entry name" value="Ribosomal_bL32_bact"/>
</dbReference>
<dbReference type="InterPro" id="IPR011332">
    <property type="entry name" value="Ribosomal_zn-bd"/>
</dbReference>
<dbReference type="NCBIfam" id="TIGR01031">
    <property type="entry name" value="rpmF_bact"/>
    <property type="match status" value="1"/>
</dbReference>
<dbReference type="PANTHER" id="PTHR35534">
    <property type="entry name" value="50S RIBOSOMAL PROTEIN L32"/>
    <property type="match status" value="1"/>
</dbReference>
<dbReference type="PANTHER" id="PTHR35534:SF1">
    <property type="entry name" value="LARGE RIBOSOMAL SUBUNIT PROTEIN BL32"/>
    <property type="match status" value="1"/>
</dbReference>
<dbReference type="Pfam" id="PF01783">
    <property type="entry name" value="Ribosomal_L32p"/>
    <property type="match status" value="1"/>
</dbReference>
<dbReference type="SUPFAM" id="SSF57829">
    <property type="entry name" value="Zn-binding ribosomal proteins"/>
    <property type="match status" value="1"/>
</dbReference>
<organism>
    <name type="scientific">Haemophilus influenzae (strain PittEE)</name>
    <dbReference type="NCBI Taxonomy" id="374930"/>
    <lineage>
        <taxon>Bacteria</taxon>
        <taxon>Pseudomonadati</taxon>
        <taxon>Pseudomonadota</taxon>
        <taxon>Gammaproteobacteria</taxon>
        <taxon>Pasteurellales</taxon>
        <taxon>Pasteurellaceae</taxon>
        <taxon>Haemophilus</taxon>
    </lineage>
</organism>
<feature type="chain" id="PRO_1000005060" description="Large ribosomal subunit protein bL32">
    <location>
        <begin position="1"/>
        <end position="56"/>
    </location>
</feature>
<feature type="region of interest" description="Disordered" evidence="2">
    <location>
        <begin position="1"/>
        <end position="37"/>
    </location>
</feature>
<feature type="compositionally biased region" description="Basic residues" evidence="2">
    <location>
        <begin position="7"/>
        <end position="16"/>
    </location>
</feature>